<name>FDHD_ECOL6</name>
<keyword id="KW-0963">Cytoplasm</keyword>
<keyword id="KW-0501">Molybdenum cofactor biosynthesis</keyword>
<keyword id="KW-1185">Reference proteome</keyword>
<protein>
    <recommendedName>
        <fullName evidence="1">Sulfur carrier protein FdhD</fullName>
    </recommendedName>
</protein>
<proteinExistence type="inferred from homology"/>
<sequence>MKKTQQKEIENVTNITGVRQIELWRRDDLQHPRLDEVAEEVPVALVYNGISHVVMMASPKDLEYFALGFSLSEGIIESPRDIFGMDVVPSCNGLEVQIELSSRRFMGLKERRRALAGRTGCGVCGVEQLNDIGKPVQPLPFTQMFDLNKLDDALRHLNDFQPVGQLTGCTHAAAWMLPSGELVGGHEDVGRHVALDKLLGRRSQEGESWQQGAVLVSSRASYEMVQKSAMCGVEILFAVSAATTLAVEVAERCNLTLVGFCKPGRATVYTHPQRLSN</sequence>
<comment type="function">
    <text evidence="1">Required for formate dehydrogenase (FDH) activity. Acts as a sulfur carrier protein that transfers sulfur from IscS to the molybdenum cofactor prior to its insertion into FDH.</text>
</comment>
<comment type="subcellular location">
    <subcellularLocation>
        <location evidence="1">Cytoplasm</location>
    </subcellularLocation>
</comment>
<comment type="similarity">
    <text evidence="1">Belongs to the FdhD family.</text>
</comment>
<accession>Q8FBE5</accession>
<dbReference type="EMBL" id="AE014075">
    <property type="protein sequence ID" value="AAN83275.1"/>
    <property type="molecule type" value="Genomic_DNA"/>
</dbReference>
<dbReference type="RefSeq" id="WP_000753585.1">
    <property type="nucleotide sequence ID" value="NZ_CP051263.1"/>
</dbReference>
<dbReference type="SMR" id="Q8FBE5"/>
<dbReference type="STRING" id="199310.c4847"/>
<dbReference type="KEGG" id="ecc:c4847"/>
<dbReference type="eggNOG" id="COG1526">
    <property type="taxonomic scope" value="Bacteria"/>
</dbReference>
<dbReference type="HOGENOM" id="CLU_056887_2_0_6"/>
<dbReference type="BioCyc" id="ECOL199310:C4847-MONOMER"/>
<dbReference type="Proteomes" id="UP000001410">
    <property type="component" value="Chromosome"/>
</dbReference>
<dbReference type="GO" id="GO:0005737">
    <property type="term" value="C:cytoplasm"/>
    <property type="evidence" value="ECO:0007669"/>
    <property type="project" value="UniProtKB-SubCell"/>
</dbReference>
<dbReference type="GO" id="GO:0097163">
    <property type="term" value="F:sulfur carrier activity"/>
    <property type="evidence" value="ECO:0007669"/>
    <property type="project" value="UniProtKB-UniRule"/>
</dbReference>
<dbReference type="GO" id="GO:0016783">
    <property type="term" value="F:sulfurtransferase activity"/>
    <property type="evidence" value="ECO:0007669"/>
    <property type="project" value="InterPro"/>
</dbReference>
<dbReference type="GO" id="GO:0006777">
    <property type="term" value="P:Mo-molybdopterin cofactor biosynthetic process"/>
    <property type="evidence" value="ECO:0007669"/>
    <property type="project" value="UniProtKB-UniRule"/>
</dbReference>
<dbReference type="FunFam" id="3.10.20.10:FF:000003">
    <property type="entry name" value="Sulfur carrier protein FdhD"/>
    <property type="match status" value="1"/>
</dbReference>
<dbReference type="FunFam" id="3.40.140.10:FF:000027">
    <property type="entry name" value="Sulfur carrier protein FdhD"/>
    <property type="match status" value="1"/>
</dbReference>
<dbReference type="Gene3D" id="3.10.20.10">
    <property type="match status" value="1"/>
</dbReference>
<dbReference type="Gene3D" id="3.40.140.10">
    <property type="entry name" value="Cytidine Deaminase, domain 2"/>
    <property type="match status" value="1"/>
</dbReference>
<dbReference type="HAMAP" id="MF_00187">
    <property type="entry name" value="FdhD"/>
    <property type="match status" value="1"/>
</dbReference>
<dbReference type="InterPro" id="IPR016193">
    <property type="entry name" value="Cytidine_deaminase-like"/>
</dbReference>
<dbReference type="InterPro" id="IPR003786">
    <property type="entry name" value="FdhD"/>
</dbReference>
<dbReference type="NCBIfam" id="TIGR00129">
    <property type="entry name" value="fdhD_narQ"/>
    <property type="match status" value="1"/>
</dbReference>
<dbReference type="PANTHER" id="PTHR30592">
    <property type="entry name" value="FORMATE DEHYDROGENASE"/>
    <property type="match status" value="1"/>
</dbReference>
<dbReference type="PANTHER" id="PTHR30592:SF1">
    <property type="entry name" value="SULFUR CARRIER PROTEIN FDHD"/>
    <property type="match status" value="1"/>
</dbReference>
<dbReference type="Pfam" id="PF02634">
    <property type="entry name" value="FdhD-NarQ"/>
    <property type="match status" value="1"/>
</dbReference>
<dbReference type="PIRSF" id="PIRSF015626">
    <property type="entry name" value="FdhD"/>
    <property type="match status" value="1"/>
</dbReference>
<dbReference type="SUPFAM" id="SSF53927">
    <property type="entry name" value="Cytidine deaminase-like"/>
    <property type="match status" value="1"/>
</dbReference>
<feature type="chain" id="PRO_0000152900" description="Sulfur carrier protein FdhD">
    <location>
        <begin position="1"/>
        <end position="277"/>
    </location>
</feature>
<feature type="active site" description="Cysteine persulfide intermediate" evidence="1">
    <location>
        <position position="121"/>
    </location>
</feature>
<feature type="binding site" evidence="1">
    <location>
        <begin position="260"/>
        <end position="265"/>
    </location>
    <ligand>
        <name>Mo-bis(molybdopterin guanine dinucleotide)</name>
        <dbReference type="ChEBI" id="CHEBI:60539"/>
    </ligand>
</feature>
<reference key="1">
    <citation type="journal article" date="2002" name="Proc. Natl. Acad. Sci. U.S.A.">
        <title>Extensive mosaic structure revealed by the complete genome sequence of uropathogenic Escherichia coli.</title>
        <authorList>
            <person name="Welch R.A."/>
            <person name="Burland V."/>
            <person name="Plunkett G. III"/>
            <person name="Redford P."/>
            <person name="Roesch P."/>
            <person name="Rasko D."/>
            <person name="Buckles E.L."/>
            <person name="Liou S.-R."/>
            <person name="Boutin A."/>
            <person name="Hackett J."/>
            <person name="Stroud D."/>
            <person name="Mayhew G.F."/>
            <person name="Rose D.J."/>
            <person name="Zhou S."/>
            <person name="Schwartz D.C."/>
            <person name="Perna N.T."/>
            <person name="Mobley H.L.T."/>
            <person name="Donnenberg M.S."/>
            <person name="Blattner F.R."/>
        </authorList>
    </citation>
    <scope>NUCLEOTIDE SEQUENCE [LARGE SCALE GENOMIC DNA]</scope>
    <source>
        <strain>CFT073 / ATCC 700928 / UPEC</strain>
    </source>
</reference>
<gene>
    <name evidence="1" type="primary">fdhD</name>
    <name type="ordered locus">c4847</name>
</gene>
<organism>
    <name type="scientific">Escherichia coli O6:H1 (strain CFT073 / ATCC 700928 / UPEC)</name>
    <dbReference type="NCBI Taxonomy" id="199310"/>
    <lineage>
        <taxon>Bacteria</taxon>
        <taxon>Pseudomonadati</taxon>
        <taxon>Pseudomonadota</taxon>
        <taxon>Gammaproteobacteria</taxon>
        <taxon>Enterobacterales</taxon>
        <taxon>Enterobacteriaceae</taxon>
        <taxon>Escherichia</taxon>
    </lineage>
</organism>
<evidence type="ECO:0000255" key="1">
    <source>
        <dbReference type="HAMAP-Rule" id="MF_00187"/>
    </source>
</evidence>